<name>HIS5_CAUVC</name>
<keyword id="KW-0028">Amino-acid biosynthesis</keyword>
<keyword id="KW-0963">Cytoplasm</keyword>
<keyword id="KW-0315">Glutamine amidotransferase</keyword>
<keyword id="KW-0368">Histidine biosynthesis</keyword>
<keyword id="KW-0378">Hydrolase</keyword>
<keyword id="KW-0456">Lyase</keyword>
<keyword id="KW-1185">Reference proteome</keyword>
<reference key="1">
    <citation type="journal article" date="2001" name="Proc. Natl. Acad. Sci. U.S.A.">
        <title>Complete genome sequence of Caulobacter crescentus.</title>
        <authorList>
            <person name="Nierman W.C."/>
            <person name="Feldblyum T.V."/>
            <person name="Laub M.T."/>
            <person name="Paulsen I.T."/>
            <person name="Nelson K.E."/>
            <person name="Eisen J.A."/>
            <person name="Heidelberg J.F."/>
            <person name="Alley M.R.K."/>
            <person name="Ohta N."/>
            <person name="Maddock J.R."/>
            <person name="Potocka I."/>
            <person name="Nelson W.C."/>
            <person name="Newton A."/>
            <person name="Stephens C."/>
            <person name="Phadke N.D."/>
            <person name="Ely B."/>
            <person name="DeBoy R.T."/>
            <person name="Dodson R.J."/>
            <person name="Durkin A.S."/>
            <person name="Gwinn M.L."/>
            <person name="Haft D.H."/>
            <person name="Kolonay J.F."/>
            <person name="Smit J."/>
            <person name="Craven M.B."/>
            <person name="Khouri H.M."/>
            <person name="Shetty J."/>
            <person name="Berry K.J."/>
            <person name="Utterback T.R."/>
            <person name="Tran K."/>
            <person name="Wolf A.M."/>
            <person name="Vamathevan J.J."/>
            <person name="Ermolaeva M.D."/>
            <person name="White O."/>
            <person name="Salzberg S.L."/>
            <person name="Venter J.C."/>
            <person name="Shapiro L."/>
            <person name="Fraser C.M."/>
        </authorList>
    </citation>
    <scope>NUCLEOTIDE SEQUENCE [LARGE SCALE GENOMIC DNA]</scope>
    <source>
        <strain>ATCC 19089 / CIP 103742 / CB 15</strain>
    </source>
</reference>
<proteinExistence type="inferred from homology"/>
<accession>Q9A231</accession>
<evidence type="ECO:0000250" key="1"/>
<comment type="function">
    <text evidence="1">IGPS catalyzes the conversion of PRFAR and glutamine to IGP, AICAR and glutamate. The HisH subunit catalyzes the hydrolysis of glutamine to glutamate and ammonia as part of the synthesis of IGP and AICAR. The resulting ammonia molecule is channeled to the active site of HisF (By similarity).</text>
</comment>
<comment type="catalytic activity">
    <reaction>
        <text>5-[(5-phospho-1-deoxy-D-ribulos-1-ylimino)methylamino]-1-(5-phospho-beta-D-ribosyl)imidazole-4-carboxamide + L-glutamine = D-erythro-1-(imidazol-4-yl)glycerol 3-phosphate + 5-amino-1-(5-phospho-beta-D-ribosyl)imidazole-4-carboxamide + L-glutamate + H(+)</text>
        <dbReference type="Rhea" id="RHEA:24793"/>
        <dbReference type="ChEBI" id="CHEBI:15378"/>
        <dbReference type="ChEBI" id="CHEBI:29985"/>
        <dbReference type="ChEBI" id="CHEBI:58278"/>
        <dbReference type="ChEBI" id="CHEBI:58359"/>
        <dbReference type="ChEBI" id="CHEBI:58475"/>
        <dbReference type="ChEBI" id="CHEBI:58525"/>
        <dbReference type="EC" id="4.3.2.10"/>
    </reaction>
</comment>
<comment type="catalytic activity">
    <reaction>
        <text>L-glutamine + H2O = L-glutamate + NH4(+)</text>
        <dbReference type="Rhea" id="RHEA:15889"/>
        <dbReference type="ChEBI" id="CHEBI:15377"/>
        <dbReference type="ChEBI" id="CHEBI:28938"/>
        <dbReference type="ChEBI" id="CHEBI:29985"/>
        <dbReference type="ChEBI" id="CHEBI:58359"/>
        <dbReference type="EC" id="3.5.1.2"/>
    </reaction>
</comment>
<comment type="pathway">
    <text>Amino-acid biosynthesis; L-histidine biosynthesis; L-histidine from 5-phospho-alpha-D-ribose 1-diphosphate: step 5/9.</text>
</comment>
<comment type="subunit">
    <text evidence="1">Heterodimer of HisH and HisF.</text>
</comment>
<comment type="subcellular location">
    <subcellularLocation>
        <location evidence="1">Cytoplasm</location>
    </subcellularLocation>
</comment>
<sequence>MQTVALIDYGSGNLRSAEKALREAARRRALDADIVVTADPDLVAKADRVFLPGVGAFASCRAGLDATGVYEAMNQAVHGRGVPFMGICVGHQLLATEGLEFGVTPGLNWIQGQVKKLEPNDPTLTIPHMGWNAISLVRPHALFAGIDDGAHMYFANSFALTPSHVEDVVATADHGGPFTAAVAKDNVAGVQFHPEKSQASGLALLANFLEWRP</sequence>
<gene>
    <name type="primary">hisH</name>
    <name type="ordered locus">CC_3735</name>
</gene>
<protein>
    <recommendedName>
        <fullName>Imidazole glycerol phosphate synthase subunit HisH</fullName>
        <ecNumber>4.3.2.10</ecNumber>
    </recommendedName>
    <alternativeName>
        <fullName>IGP synthase glutaminase subunit</fullName>
        <ecNumber>3.5.1.2</ecNumber>
    </alternativeName>
    <alternativeName>
        <fullName>IGP synthase subunit HisH</fullName>
    </alternativeName>
    <alternativeName>
        <fullName>ImGP synthase subunit HisH</fullName>
        <shortName>IGPS subunit HisH</shortName>
    </alternativeName>
</protein>
<feature type="chain" id="PRO_0000152364" description="Imidazole glycerol phosphate synthase subunit HisH">
    <location>
        <begin position="1"/>
        <end position="213"/>
    </location>
</feature>
<feature type="domain" description="Glutamine amidotransferase type-1">
    <location>
        <begin position="3"/>
        <end position="213"/>
    </location>
</feature>
<feature type="active site" description="Nucleophile" evidence="1">
    <location>
        <position position="88"/>
    </location>
</feature>
<feature type="active site" evidence="1">
    <location>
        <position position="193"/>
    </location>
</feature>
<feature type="active site" evidence="1">
    <location>
        <position position="195"/>
    </location>
</feature>
<dbReference type="EC" id="4.3.2.10"/>
<dbReference type="EC" id="3.5.1.2"/>
<dbReference type="EMBL" id="AE005673">
    <property type="protein sequence ID" value="AAK25697.1"/>
    <property type="molecule type" value="Genomic_DNA"/>
</dbReference>
<dbReference type="PIR" id="E87712">
    <property type="entry name" value="E87712"/>
</dbReference>
<dbReference type="RefSeq" id="NP_422529.1">
    <property type="nucleotide sequence ID" value="NC_002696.2"/>
</dbReference>
<dbReference type="RefSeq" id="WP_010921562.1">
    <property type="nucleotide sequence ID" value="NC_002696.2"/>
</dbReference>
<dbReference type="SMR" id="Q9A231"/>
<dbReference type="STRING" id="190650.CC_3735"/>
<dbReference type="EnsemblBacteria" id="AAK25697">
    <property type="protein sequence ID" value="AAK25697"/>
    <property type="gene ID" value="CC_3735"/>
</dbReference>
<dbReference type="KEGG" id="ccr:CC_3735"/>
<dbReference type="PATRIC" id="fig|190650.5.peg.3737"/>
<dbReference type="eggNOG" id="COG0118">
    <property type="taxonomic scope" value="Bacteria"/>
</dbReference>
<dbReference type="HOGENOM" id="CLU_071837_2_0_5"/>
<dbReference type="BioCyc" id="CAULO:CC3735-MONOMER"/>
<dbReference type="UniPathway" id="UPA00031">
    <property type="reaction ID" value="UER00010"/>
</dbReference>
<dbReference type="Proteomes" id="UP000001816">
    <property type="component" value="Chromosome"/>
</dbReference>
<dbReference type="GO" id="GO:0005737">
    <property type="term" value="C:cytoplasm"/>
    <property type="evidence" value="ECO:0007669"/>
    <property type="project" value="UniProtKB-SubCell"/>
</dbReference>
<dbReference type="GO" id="GO:0004359">
    <property type="term" value="F:glutaminase activity"/>
    <property type="evidence" value="ECO:0007669"/>
    <property type="project" value="UniProtKB-EC"/>
</dbReference>
<dbReference type="GO" id="GO:0000107">
    <property type="term" value="F:imidazoleglycerol-phosphate synthase activity"/>
    <property type="evidence" value="ECO:0007669"/>
    <property type="project" value="UniProtKB-UniRule"/>
</dbReference>
<dbReference type="GO" id="GO:0016829">
    <property type="term" value="F:lyase activity"/>
    <property type="evidence" value="ECO:0007669"/>
    <property type="project" value="UniProtKB-KW"/>
</dbReference>
<dbReference type="GO" id="GO:0000105">
    <property type="term" value="P:L-histidine biosynthetic process"/>
    <property type="evidence" value="ECO:0007669"/>
    <property type="project" value="UniProtKB-UniRule"/>
</dbReference>
<dbReference type="CDD" id="cd01748">
    <property type="entry name" value="GATase1_IGP_Synthase"/>
    <property type="match status" value="1"/>
</dbReference>
<dbReference type="Gene3D" id="3.40.50.880">
    <property type="match status" value="1"/>
</dbReference>
<dbReference type="HAMAP" id="MF_00278">
    <property type="entry name" value="HisH"/>
    <property type="match status" value="1"/>
</dbReference>
<dbReference type="InterPro" id="IPR029062">
    <property type="entry name" value="Class_I_gatase-like"/>
</dbReference>
<dbReference type="InterPro" id="IPR017926">
    <property type="entry name" value="GATASE"/>
</dbReference>
<dbReference type="InterPro" id="IPR010139">
    <property type="entry name" value="Imidazole-glycPsynth_HisH"/>
</dbReference>
<dbReference type="NCBIfam" id="TIGR01855">
    <property type="entry name" value="IMP_synth_hisH"/>
    <property type="match status" value="1"/>
</dbReference>
<dbReference type="PANTHER" id="PTHR42701">
    <property type="entry name" value="IMIDAZOLE GLYCEROL PHOSPHATE SYNTHASE SUBUNIT HISH"/>
    <property type="match status" value="1"/>
</dbReference>
<dbReference type="PANTHER" id="PTHR42701:SF1">
    <property type="entry name" value="IMIDAZOLE GLYCEROL PHOSPHATE SYNTHASE SUBUNIT HISH"/>
    <property type="match status" value="1"/>
</dbReference>
<dbReference type="Pfam" id="PF00117">
    <property type="entry name" value="GATase"/>
    <property type="match status" value="1"/>
</dbReference>
<dbReference type="PIRSF" id="PIRSF000495">
    <property type="entry name" value="Amidotransf_hisH"/>
    <property type="match status" value="1"/>
</dbReference>
<dbReference type="SUPFAM" id="SSF52317">
    <property type="entry name" value="Class I glutamine amidotransferase-like"/>
    <property type="match status" value="1"/>
</dbReference>
<dbReference type="PROSITE" id="PS51273">
    <property type="entry name" value="GATASE_TYPE_1"/>
    <property type="match status" value="1"/>
</dbReference>
<organism>
    <name type="scientific">Caulobacter vibrioides (strain ATCC 19089 / CIP 103742 / CB 15)</name>
    <name type="common">Caulobacter crescentus</name>
    <dbReference type="NCBI Taxonomy" id="190650"/>
    <lineage>
        <taxon>Bacteria</taxon>
        <taxon>Pseudomonadati</taxon>
        <taxon>Pseudomonadota</taxon>
        <taxon>Alphaproteobacteria</taxon>
        <taxon>Caulobacterales</taxon>
        <taxon>Caulobacteraceae</taxon>
        <taxon>Caulobacter</taxon>
    </lineage>
</organism>